<reference key="1">
    <citation type="journal article" date="1996" name="Science">
        <title>Complete genome sequence of the methanogenic archaeon, Methanococcus jannaschii.</title>
        <authorList>
            <person name="Bult C.J."/>
            <person name="White O."/>
            <person name="Olsen G.J."/>
            <person name="Zhou L."/>
            <person name="Fleischmann R.D."/>
            <person name="Sutton G.G."/>
            <person name="Blake J.A."/>
            <person name="FitzGerald L.M."/>
            <person name="Clayton R.A."/>
            <person name="Gocayne J.D."/>
            <person name="Kerlavage A.R."/>
            <person name="Dougherty B.A."/>
            <person name="Tomb J.-F."/>
            <person name="Adams M.D."/>
            <person name="Reich C.I."/>
            <person name="Overbeek R."/>
            <person name="Kirkness E.F."/>
            <person name="Weinstock K.G."/>
            <person name="Merrick J.M."/>
            <person name="Glodek A."/>
            <person name="Scott J.L."/>
            <person name="Geoghagen N.S.M."/>
            <person name="Weidman J.F."/>
            <person name="Fuhrmann J.L."/>
            <person name="Nguyen D."/>
            <person name="Utterback T.R."/>
            <person name="Kelley J.M."/>
            <person name="Peterson J.D."/>
            <person name="Sadow P.W."/>
            <person name="Hanna M.C."/>
            <person name="Cotton M.D."/>
            <person name="Roberts K.M."/>
            <person name="Hurst M.A."/>
            <person name="Kaine B.P."/>
            <person name="Borodovsky M."/>
            <person name="Klenk H.-P."/>
            <person name="Fraser C.M."/>
            <person name="Smith H.O."/>
            <person name="Woese C.R."/>
            <person name="Venter J.C."/>
        </authorList>
    </citation>
    <scope>NUCLEOTIDE SEQUENCE [LARGE SCALE GENOMIC DNA]</scope>
    <source>
        <strain>ATCC 43067 / DSM 2661 / JAL-1 / JCM 10045 / NBRC 100440</strain>
    </source>
</reference>
<organism>
    <name type="scientific">Methanocaldococcus jannaschii (strain ATCC 43067 / DSM 2661 / JAL-1 / JCM 10045 / NBRC 100440)</name>
    <name type="common">Methanococcus jannaschii</name>
    <dbReference type="NCBI Taxonomy" id="243232"/>
    <lineage>
        <taxon>Archaea</taxon>
        <taxon>Methanobacteriati</taxon>
        <taxon>Methanobacteriota</taxon>
        <taxon>Methanomada group</taxon>
        <taxon>Methanococci</taxon>
        <taxon>Methanococcales</taxon>
        <taxon>Methanocaldococcaceae</taxon>
        <taxon>Methanocaldococcus</taxon>
    </lineage>
</organism>
<protein>
    <recommendedName>
        <fullName evidence="1">Short-type peptidyl-prolyl cis-trans isomerase</fullName>
        <shortName evidence="1">Short-type PPIase</shortName>
        <ecNumber evidence="1">5.2.1.8</ecNumber>
    </recommendedName>
    <alternativeName>
        <fullName evidence="1">FKBP-type peptidyl-prolyl cis-trans isomerase</fullName>
        <shortName evidence="1">FKBP-type PPIase</shortName>
    </alternativeName>
    <alternativeName>
        <fullName>Rotamase</fullName>
    </alternativeName>
</protein>
<evidence type="ECO:0000250" key="1">
    <source>
        <dbReference type="UniProtKB" id="O52980"/>
    </source>
</evidence>
<evidence type="ECO:0000250" key="2">
    <source>
        <dbReference type="UniProtKB" id="Q58235"/>
    </source>
</evidence>
<evidence type="ECO:0000255" key="3">
    <source>
        <dbReference type="PROSITE-ProRule" id="PRU00277"/>
    </source>
</evidence>
<evidence type="ECO:0000305" key="4"/>
<gene>
    <name type="ordered locus">MJ0278</name>
</gene>
<dbReference type="EC" id="5.2.1.8" evidence="1"/>
<dbReference type="EMBL" id="L77117">
    <property type="protein sequence ID" value="AAB98266.1"/>
    <property type="molecule type" value="Genomic_DNA"/>
</dbReference>
<dbReference type="PIR" id="G64334">
    <property type="entry name" value="G64334"/>
</dbReference>
<dbReference type="SMR" id="Q57726"/>
<dbReference type="FunCoup" id="Q57726">
    <property type="interactions" value="16"/>
</dbReference>
<dbReference type="STRING" id="243232.MJ_0278"/>
<dbReference type="PaxDb" id="243232-MJ_0278"/>
<dbReference type="EnsemblBacteria" id="AAB98266">
    <property type="protein sequence ID" value="AAB98266"/>
    <property type="gene ID" value="MJ_0278"/>
</dbReference>
<dbReference type="KEGG" id="mja:MJ_0278"/>
<dbReference type="eggNOG" id="arCOG00981">
    <property type="taxonomic scope" value="Archaea"/>
</dbReference>
<dbReference type="HOGENOM" id="CLU_098197_2_0_2"/>
<dbReference type="InParanoid" id="Q57726"/>
<dbReference type="PhylomeDB" id="Q57726"/>
<dbReference type="Proteomes" id="UP000000805">
    <property type="component" value="Chromosome"/>
</dbReference>
<dbReference type="GO" id="GO:0005829">
    <property type="term" value="C:cytosol"/>
    <property type="evidence" value="ECO:0000318"/>
    <property type="project" value="GO_Central"/>
</dbReference>
<dbReference type="GO" id="GO:0003755">
    <property type="term" value="F:peptidyl-prolyl cis-trans isomerase activity"/>
    <property type="evidence" value="ECO:0000318"/>
    <property type="project" value="GO_Central"/>
</dbReference>
<dbReference type="GO" id="GO:0042026">
    <property type="term" value="P:protein refolding"/>
    <property type="evidence" value="ECO:0000318"/>
    <property type="project" value="GO_Central"/>
</dbReference>
<dbReference type="Gene3D" id="2.40.10.330">
    <property type="match status" value="1"/>
</dbReference>
<dbReference type="Gene3D" id="3.10.50.40">
    <property type="match status" value="1"/>
</dbReference>
<dbReference type="InterPro" id="IPR046357">
    <property type="entry name" value="PPIase_dom_sf"/>
</dbReference>
<dbReference type="InterPro" id="IPR001179">
    <property type="entry name" value="PPIase_FKBP_dom"/>
</dbReference>
<dbReference type="InterPro" id="IPR048261">
    <property type="entry name" value="SlpA/SlyD-like_ins_sf"/>
</dbReference>
<dbReference type="PANTHER" id="PTHR47861">
    <property type="entry name" value="FKBP-TYPE PEPTIDYL-PROLYL CIS-TRANS ISOMERASE SLYD"/>
    <property type="match status" value="1"/>
</dbReference>
<dbReference type="PANTHER" id="PTHR47861:SF3">
    <property type="entry name" value="FKBP-TYPE PEPTIDYL-PROLYL CIS-TRANS ISOMERASE SLYD"/>
    <property type="match status" value="1"/>
</dbReference>
<dbReference type="Pfam" id="PF00254">
    <property type="entry name" value="FKBP_C"/>
    <property type="match status" value="1"/>
</dbReference>
<dbReference type="SUPFAM" id="SSF54534">
    <property type="entry name" value="FKBP-like"/>
    <property type="match status" value="1"/>
</dbReference>
<dbReference type="PROSITE" id="PS50059">
    <property type="entry name" value="FKBP_PPIASE"/>
    <property type="match status" value="1"/>
</dbReference>
<keyword id="KW-0143">Chaperone</keyword>
<keyword id="KW-0963">Cytoplasm</keyword>
<keyword id="KW-0413">Isomerase</keyword>
<keyword id="KW-1185">Reference proteome</keyword>
<keyword id="KW-0697">Rotamase</keyword>
<feature type="chain" id="PRO_0000075376" description="Short-type peptidyl-prolyl cis-trans isomerase">
    <location>
        <begin position="1"/>
        <end position="157"/>
    </location>
</feature>
<feature type="domain" description="PPIase FKBP-type" evidence="3">
    <location>
        <begin position="1"/>
        <end position="95"/>
    </location>
</feature>
<feature type="region of interest" description="IF" evidence="2">
    <location>
        <begin position="86"/>
        <end position="137"/>
    </location>
</feature>
<accession>Q57726</accession>
<name>FKBPS_METJA</name>
<comment type="function">
    <text evidence="1">Catalyzes the cis-trans isomerization of peptidyl prolyl bonds and accelerates protein folding. Also exhibits chaperone-like activity.</text>
</comment>
<comment type="catalytic activity">
    <reaction evidence="1">
        <text>[protein]-peptidylproline (omega=180) = [protein]-peptidylproline (omega=0)</text>
        <dbReference type="Rhea" id="RHEA:16237"/>
        <dbReference type="Rhea" id="RHEA-COMP:10747"/>
        <dbReference type="Rhea" id="RHEA-COMP:10748"/>
        <dbReference type="ChEBI" id="CHEBI:83833"/>
        <dbReference type="ChEBI" id="CHEBI:83834"/>
        <dbReference type="EC" id="5.2.1.8"/>
    </reaction>
</comment>
<comment type="subcellular location">
    <subcellularLocation>
        <location evidence="1">Cytoplasm</location>
    </subcellularLocation>
</comment>
<comment type="domain">
    <text evidence="1">Contains an N-terminal PPIase domain and an IF (Insert in the Flap) domain.</text>
</comment>
<comment type="similarity">
    <text evidence="4">Belongs to the FKBP-type PPIase family.</text>
</comment>
<sequence>MINLIKKGDYVKVDYILEVDGKVIDTSIEEVAKENKIYYPEREYEPIGFIVGNGELIEGFEEAVIGMEVGEEKTVTIPPEKGYGLRDERLIQEIPKEMFADADFEPQEGMLILASGIPAKIIKVTDDTVTLDFNHELAGKELKFTIKVRDVQPAESE</sequence>
<proteinExistence type="inferred from homology"/>